<protein>
    <recommendedName>
        <fullName evidence="1">N(2)-fixation sustaining protein CowN</fullName>
    </recommendedName>
    <alternativeName>
        <fullName evidence="1">CO weal-nitrogenase</fullName>
    </alternativeName>
</protein>
<name>COWN_TRIL1</name>
<comment type="function">
    <text evidence="1">Is required to sustain N(2)-dependent growth in the presence of low levels of carbon monoxide (CO). Probably acts by protecting the N(2) fixation ability of the nitrogenase complex, which is inactivated in the presence of CO.</text>
</comment>
<comment type="similarity">
    <text evidence="1">Belongs to the CowN family.</text>
</comment>
<gene>
    <name evidence="1" type="primary">cowN</name>
    <name type="ordered locus">Glov_0429</name>
</gene>
<feature type="chain" id="PRO_0000407256" description="N(2)-fixation sustaining protein CowN">
    <location>
        <begin position="1"/>
        <end position="98"/>
    </location>
</feature>
<dbReference type="EMBL" id="CP001089">
    <property type="protein sequence ID" value="ACD94157.1"/>
    <property type="molecule type" value="Genomic_DNA"/>
</dbReference>
<dbReference type="RefSeq" id="WP_012468514.1">
    <property type="nucleotide sequence ID" value="NC_010814.1"/>
</dbReference>
<dbReference type="STRING" id="398767.Glov_0429"/>
<dbReference type="KEGG" id="glo:Glov_0429"/>
<dbReference type="eggNOG" id="ENOG50330SG">
    <property type="taxonomic scope" value="Bacteria"/>
</dbReference>
<dbReference type="HOGENOM" id="CLU_149349_0_0_7"/>
<dbReference type="OrthoDB" id="7689335at2"/>
<dbReference type="Proteomes" id="UP000002420">
    <property type="component" value="Chromosome"/>
</dbReference>
<dbReference type="GO" id="GO:0009399">
    <property type="term" value="P:nitrogen fixation"/>
    <property type="evidence" value="ECO:0007669"/>
    <property type="project" value="UniProtKB-KW"/>
</dbReference>
<dbReference type="HAMAP" id="MF_02117">
    <property type="entry name" value="CowN"/>
    <property type="match status" value="1"/>
</dbReference>
<dbReference type="InterPro" id="IPR024899">
    <property type="entry name" value="CowN"/>
</dbReference>
<dbReference type="NCBIfam" id="NF033689">
    <property type="entry name" value="N2Fix_CO_CowN"/>
    <property type="match status" value="1"/>
</dbReference>
<dbReference type="Pfam" id="PF20543">
    <property type="entry name" value="CowN"/>
    <property type="match status" value="1"/>
</dbReference>
<organism>
    <name type="scientific">Trichlorobacter lovleyi (strain ATCC BAA-1151 / DSM 17278 / SZ)</name>
    <name type="common">Geobacter lovleyi</name>
    <dbReference type="NCBI Taxonomy" id="398767"/>
    <lineage>
        <taxon>Bacteria</taxon>
        <taxon>Pseudomonadati</taxon>
        <taxon>Thermodesulfobacteriota</taxon>
        <taxon>Desulfuromonadia</taxon>
        <taxon>Geobacterales</taxon>
        <taxon>Geobacteraceae</taxon>
        <taxon>Trichlorobacter</taxon>
    </lineage>
</organism>
<reference key="1">
    <citation type="submission" date="2008-05" db="EMBL/GenBank/DDBJ databases">
        <title>Complete sequence of chromosome of Geobacter lovleyi SZ.</title>
        <authorList>
            <consortium name="US DOE Joint Genome Institute"/>
            <person name="Lucas S."/>
            <person name="Copeland A."/>
            <person name="Lapidus A."/>
            <person name="Glavina del Rio T."/>
            <person name="Dalin E."/>
            <person name="Tice H."/>
            <person name="Bruce D."/>
            <person name="Goodwin L."/>
            <person name="Pitluck S."/>
            <person name="Chertkov O."/>
            <person name="Meincke L."/>
            <person name="Brettin T."/>
            <person name="Detter J.C."/>
            <person name="Han C."/>
            <person name="Tapia R."/>
            <person name="Kuske C.R."/>
            <person name="Schmutz J."/>
            <person name="Larimer F."/>
            <person name="Land M."/>
            <person name="Hauser L."/>
            <person name="Kyrpides N."/>
            <person name="Mikhailova N."/>
            <person name="Sung Y."/>
            <person name="Fletcher K.E."/>
            <person name="Ritalahti K.M."/>
            <person name="Loeffler F.E."/>
            <person name="Richardson P."/>
        </authorList>
    </citation>
    <scope>NUCLEOTIDE SEQUENCE [LARGE SCALE GENOMIC DNA]</scope>
    <source>
        <strain>ATCC BAA-1151 / DSM 17278 / SZ</strain>
    </source>
</reference>
<accession>B3E2A4</accession>
<keyword id="KW-0535">Nitrogen fixation</keyword>
<keyword id="KW-1185">Reference proteome</keyword>
<evidence type="ECO:0000255" key="1">
    <source>
        <dbReference type="HAMAP-Rule" id="MF_02117"/>
    </source>
</evidence>
<sequence length="98" mass="11449">MSKPDRYVSFVGIDGDSNARKLVALLRRHIDDPARTNRFWELFKDKLEKINKPDETSGFSQDELYLVHAYINNIRELFETYDDQPALALLDRIEAESC</sequence>
<proteinExistence type="inferred from homology"/>